<gene>
    <name evidence="1" type="primary">prfA</name>
    <name type="ordered locus">SRU_1364</name>
</gene>
<evidence type="ECO:0000255" key="1">
    <source>
        <dbReference type="HAMAP-Rule" id="MF_00093"/>
    </source>
</evidence>
<evidence type="ECO:0000256" key="2">
    <source>
        <dbReference type="SAM" id="MobiDB-lite"/>
    </source>
</evidence>
<comment type="function">
    <text evidence="1">Peptide chain release factor 1 directs the termination of translation in response to the peptide chain termination codons UAG and UAA.</text>
</comment>
<comment type="subcellular location">
    <subcellularLocation>
        <location evidence="1">Cytoplasm</location>
    </subcellularLocation>
</comment>
<comment type="PTM">
    <text evidence="1">Methylated by PrmC. Methylation increases the termination efficiency of RF1.</text>
</comment>
<comment type="similarity">
    <text evidence="1">Belongs to the prokaryotic/mitochondrial release factor family.</text>
</comment>
<organism>
    <name type="scientific">Salinibacter ruber (strain DSM 13855 / M31)</name>
    <dbReference type="NCBI Taxonomy" id="309807"/>
    <lineage>
        <taxon>Bacteria</taxon>
        <taxon>Pseudomonadati</taxon>
        <taxon>Rhodothermota</taxon>
        <taxon>Rhodothermia</taxon>
        <taxon>Rhodothermales</taxon>
        <taxon>Salinibacteraceae</taxon>
        <taxon>Salinibacter</taxon>
    </lineage>
</organism>
<sequence length="357" mass="40293">MIEREKLDKVKHRFQEVESLMADPEVANDPDRMRELGQEHSRLEEVVEAIDRYERLLDERDELEGMIRDESGEMEALAKEELEQLETKLPAVEEDLKQKLIPKDPEEEKNAIVEIRAGAGGDEASLFAGDLFRLYTQYAKQQGWTYELIDASPGTQGGFREVIFAVKGEDVYGTLKYEAGVHRVQRVPETESSGRIHTSAATVAVLPEAEEVDVDINPSDLTIETFKATGPGGQSVNTTDSAVRIKHAPSGVEVSCQDEKSQHKNRSKAMRVLRSRVYEKKREEQQAEREEARRSMVGSGDRSAKIRTYNFPQDRVTDHRLEGGQKNHSLQPIMDGEIDPIIDALRAEEHAEKLANL</sequence>
<dbReference type="EMBL" id="CP000159">
    <property type="protein sequence ID" value="ABC45712.1"/>
    <property type="molecule type" value="Genomic_DNA"/>
</dbReference>
<dbReference type="RefSeq" id="WP_011404116.1">
    <property type="nucleotide sequence ID" value="NC_007677.1"/>
</dbReference>
<dbReference type="RefSeq" id="YP_445488.1">
    <property type="nucleotide sequence ID" value="NC_007677.1"/>
</dbReference>
<dbReference type="SMR" id="Q2S2U3"/>
<dbReference type="STRING" id="309807.SRU_1364"/>
<dbReference type="EnsemblBacteria" id="ABC45712">
    <property type="protein sequence ID" value="ABC45712"/>
    <property type="gene ID" value="SRU_1364"/>
</dbReference>
<dbReference type="GeneID" id="83728277"/>
<dbReference type="KEGG" id="sru:SRU_1364"/>
<dbReference type="PATRIC" id="fig|309807.25.peg.1418"/>
<dbReference type="eggNOG" id="COG0216">
    <property type="taxonomic scope" value="Bacteria"/>
</dbReference>
<dbReference type="HOGENOM" id="CLU_036856_0_1_10"/>
<dbReference type="OrthoDB" id="9806673at2"/>
<dbReference type="Proteomes" id="UP000008674">
    <property type="component" value="Chromosome"/>
</dbReference>
<dbReference type="GO" id="GO:0005737">
    <property type="term" value="C:cytoplasm"/>
    <property type="evidence" value="ECO:0007669"/>
    <property type="project" value="UniProtKB-SubCell"/>
</dbReference>
<dbReference type="GO" id="GO:0016149">
    <property type="term" value="F:translation release factor activity, codon specific"/>
    <property type="evidence" value="ECO:0007669"/>
    <property type="project" value="UniProtKB-UniRule"/>
</dbReference>
<dbReference type="FunFam" id="3.30.160.20:FF:000004">
    <property type="entry name" value="Peptide chain release factor 1"/>
    <property type="match status" value="1"/>
</dbReference>
<dbReference type="FunFam" id="3.30.70.1660:FF:000002">
    <property type="entry name" value="Peptide chain release factor 1"/>
    <property type="match status" value="1"/>
</dbReference>
<dbReference type="Gene3D" id="3.30.160.20">
    <property type="match status" value="1"/>
</dbReference>
<dbReference type="Gene3D" id="3.30.70.1660">
    <property type="match status" value="1"/>
</dbReference>
<dbReference type="Gene3D" id="6.10.140.1950">
    <property type="match status" value="1"/>
</dbReference>
<dbReference type="HAMAP" id="MF_00093">
    <property type="entry name" value="Rel_fac_1"/>
    <property type="match status" value="1"/>
</dbReference>
<dbReference type="InterPro" id="IPR005139">
    <property type="entry name" value="PCRF"/>
</dbReference>
<dbReference type="InterPro" id="IPR000352">
    <property type="entry name" value="Pep_chain_release_fac_I"/>
</dbReference>
<dbReference type="InterPro" id="IPR045853">
    <property type="entry name" value="Pep_chain_release_fac_I_sf"/>
</dbReference>
<dbReference type="InterPro" id="IPR050057">
    <property type="entry name" value="Prokaryotic/Mito_RF"/>
</dbReference>
<dbReference type="InterPro" id="IPR004373">
    <property type="entry name" value="RF-1"/>
</dbReference>
<dbReference type="NCBIfam" id="TIGR00019">
    <property type="entry name" value="prfA"/>
    <property type="match status" value="1"/>
</dbReference>
<dbReference type="NCBIfam" id="NF001859">
    <property type="entry name" value="PRK00591.1"/>
    <property type="match status" value="1"/>
</dbReference>
<dbReference type="PANTHER" id="PTHR43804">
    <property type="entry name" value="LD18447P"/>
    <property type="match status" value="1"/>
</dbReference>
<dbReference type="PANTHER" id="PTHR43804:SF7">
    <property type="entry name" value="LD18447P"/>
    <property type="match status" value="1"/>
</dbReference>
<dbReference type="Pfam" id="PF03462">
    <property type="entry name" value="PCRF"/>
    <property type="match status" value="1"/>
</dbReference>
<dbReference type="Pfam" id="PF00472">
    <property type="entry name" value="RF-1"/>
    <property type="match status" value="1"/>
</dbReference>
<dbReference type="SMART" id="SM00937">
    <property type="entry name" value="PCRF"/>
    <property type="match status" value="1"/>
</dbReference>
<dbReference type="SUPFAM" id="SSF75620">
    <property type="entry name" value="Release factor"/>
    <property type="match status" value="1"/>
</dbReference>
<feature type="chain" id="PRO_0000263344" description="Peptide chain release factor 1">
    <location>
        <begin position="1"/>
        <end position="357"/>
    </location>
</feature>
<feature type="region of interest" description="Disordered" evidence="2">
    <location>
        <begin position="249"/>
        <end position="308"/>
    </location>
</feature>
<feature type="compositionally biased region" description="Basic residues" evidence="2">
    <location>
        <begin position="263"/>
        <end position="274"/>
    </location>
</feature>
<feature type="compositionally biased region" description="Basic and acidic residues" evidence="2">
    <location>
        <begin position="276"/>
        <end position="294"/>
    </location>
</feature>
<feature type="modified residue" description="N5-methylglutamine" evidence="1">
    <location>
        <position position="234"/>
    </location>
</feature>
<name>RF1_SALRD</name>
<protein>
    <recommendedName>
        <fullName evidence="1">Peptide chain release factor 1</fullName>
        <shortName evidence="1">RF-1</shortName>
    </recommendedName>
</protein>
<accession>Q2S2U3</accession>
<reference key="1">
    <citation type="journal article" date="2005" name="Proc. Natl. Acad. Sci. U.S.A.">
        <title>The genome of Salinibacter ruber: convergence and gene exchange among hyperhalophilic bacteria and archaea.</title>
        <authorList>
            <person name="Mongodin E.F."/>
            <person name="Nelson K.E."/>
            <person name="Daugherty S."/>
            <person name="DeBoy R.T."/>
            <person name="Wister J."/>
            <person name="Khouri H."/>
            <person name="Weidman J."/>
            <person name="Walsh D.A."/>
            <person name="Papke R.T."/>
            <person name="Sanchez Perez G."/>
            <person name="Sharma A.K."/>
            <person name="Nesbo C.L."/>
            <person name="MacLeod D."/>
            <person name="Bapteste E."/>
            <person name="Doolittle W.F."/>
            <person name="Charlebois R.L."/>
            <person name="Legault B."/>
            <person name="Rodriguez-Valera F."/>
        </authorList>
    </citation>
    <scope>NUCLEOTIDE SEQUENCE [LARGE SCALE GENOMIC DNA]</scope>
    <source>
        <strain>DSM 13855 / CECT 5946 / M31</strain>
    </source>
</reference>
<proteinExistence type="inferred from homology"/>
<keyword id="KW-0963">Cytoplasm</keyword>
<keyword id="KW-0488">Methylation</keyword>
<keyword id="KW-0648">Protein biosynthesis</keyword>
<keyword id="KW-1185">Reference proteome</keyword>